<sequence>MSYSLLFLLALQFCLGSASRTTLTSAHSRELTTPPTSPQATAAWLPPGGTSWAEGGTVSQPLSNFTGSVDSHGTCQCSVSLPDTAFPADRVERLEYTAHILSQKFEREFSKVKEYVQLISVYEKRLLNLTVRVEVMEKDSISYTELDFELIKLEVKEMQKLVLQLKKNFVGSTHIIDMLEVEIRNMTLLVEKLESLDQNNVLSIRRQILALKTKLKECEASKSDLVPATPPPPAPGSCSHGGVVNISAPSVIQLNWLGFSYKYGAWGRDYSPQHPERTLYWVAPLNTDARALEYYRLYDSLDNLLIYSHFRDYRIRYGQGGGTVAFNNNLYVNWYNGGNIAKINLTTNVVDVNRPLPLAAYNNRFSYANVNWQDIDLAVDEQALWAIYATEASTGNIVISKLNDTTLEVISTWVTKQYKPSVSNAFMVCGVLYATRTLNTKTEEIFYYYDTNTEREGNLGITMRKMQERIQSINYHPFDQKLYVYNDGYLLNYDLVFLQTPRQPV</sequence>
<protein>
    <recommendedName>
        <fullName>Olfactomedin-4</fullName>
        <shortName>OLM4</shortName>
    </recommendedName>
</protein>
<comment type="function">
    <text evidence="1">May promote proliferation of pancreatic cancer cells by favoring the transition from the S to G2/M phase. In myeloid leukemic cell lines, inhibits cell growth and induces cell differentiation and apoptosis. May play a role in the inhibition of EIF4EBP1 phosphorylation/deactivation. Facilitates cell adhesion, most probably through interaction with cell surface lectins and cadherin (By similarity).</text>
</comment>
<comment type="subunit">
    <text evidence="1">Homomultimer; disulfide-linked. Interacts with NDUFA13. Interacts with cell surface lectins (locutions ricinus communis agglutinin I, concanavalin A and wheat germ agglutinin) and cadherin (By similarity).</text>
</comment>
<comment type="subcellular location">
    <subcellularLocation>
        <location evidence="1">Secreted</location>
        <location evidence="1">Extracellular space</location>
    </subcellularLocation>
    <subcellularLocation>
        <location evidence="1">Mitochondrion</location>
    </subcellularLocation>
</comment>
<comment type="domain">
    <text evidence="1">The olfactomedin-like domain is involved in the interaction with cadherin.</text>
</comment>
<comment type="PTM">
    <text evidence="1">N-glycosylated.</text>
</comment>
<feature type="signal peptide" evidence="2">
    <location>
        <begin position="1"/>
        <end position="18"/>
    </location>
</feature>
<feature type="chain" id="PRO_0000311399" description="Olfactomedin-4">
    <location>
        <begin position="19"/>
        <end position="505"/>
    </location>
</feature>
<feature type="domain" description="Olfactomedin-like" evidence="3">
    <location>
        <begin position="237"/>
        <end position="499"/>
    </location>
</feature>
<feature type="coiled-coil region" evidence="2">
    <location>
        <begin position="174"/>
        <end position="225"/>
    </location>
</feature>
<feature type="glycosylation site" description="N-linked (GlcNAc...) asparagine" evidence="2">
    <location>
        <position position="64"/>
    </location>
</feature>
<feature type="glycosylation site" description="N-linked (GlcNAc...) asparagine" evidence="2">
    <location>
        <position position="128"/>
    </location>
</feature>
<feature type="disulfide bond" evidence="3">
    <location>
        <begin position="238"/>
        <end position="429"/>
    </location>
</feature>
<name>OLFM4_MOUSE</name>
<proteinExistence type="evidence at transcript level"/>
<gene>
    <name type="primary">Olfm4</name>
</gene>
<keyword id="KW-0130">Cell adhesion</keyword>
<keyword id="KW-0175">Coiled coil</keyword>
<keyword id="KW-1015">Disulfide bond</keyword>
<keyword id="KW-0325">Glycoprotein</keyword>
<keyword id="KW-0496">Mitochondrion</keyword>
<keyword id="KW-1185">Reference proteome</keyword>
<keyword id="KW-0964">Secreted</keyword>
<keyword id="KW-0732">Signal</keyword>
<dbReference type="EMBL" id="AK133536">
    <property type="protein sequence ID" value="BAE21711.1"/>
    <property type="molecule type" value="mRNA"/>
</dbReference>
<dbReference type="CCDS" id="CCDS36989.2"/>
<dbReference type="RefSeq" id="NP_001338876.1">
    <property type="nucleotide sequence ID" value="NM_001351947.1"/>
</dbReference>
<dbReference type="SMR" id="Q3UZZ4"/>
<dbReference type="DIP" id="DIP-59534N"/>
<dbReference type="FunCoup" id="Q3UZZ4">
    <property type="interactions" value="147"/>
</dbReference>
<dbReference type="IntAct" id="Q3UZZ4">
    <property type="interactions" value="3"/>
</dbReference>
<dbReference type="STRING" id="10090.ENSMUSP00000086112"/>
<dbReference type="GlyCosmos" id="Q3UZZ4">
    <property type="glycosylation" value="2 sites, No reported glycans"/>
</dbReference>
<dbReference type="GlyGen" id="Q3UZZ4">
    <property type="glycosylation" value="2 sites"/>
</dbReference>
<dbReference type="PhosphoSitePlus" id="Q3UZZ4"/>
<dbReference type="PaxDb" id="10090-ENSMUSP00000086112"/>
<dbReference type="ProteomicsDB" id="293845"/>
<dbReference type="Antibodypedia" id="24251">
    <property type="antibodies" value="246 antibodies from 32 providers"/>
</dbReference>
<dbReference type="Ensembl" id="ENSMUST00000228749.2">
    <property type="protein sequence ID" value="ENSMUSP00000154285.2"/>
    <property type="gene ID" value="ENSMUSG00000022026.8"/>
</dbReference>
<dbReference type="GeneID" id="380924"/>
<dbReference type="UCSC" id="uc007utn.1">
    <property type="organism name" value="mouse"/>
</dbReference>
<dbReference type="AGR" id="MGI:2685142"/>
<dbReference type="MGI" id="MGI:2685142">
    <property type="gene designation" value="Olfm4"/>
</dbReference>
<dbReference type="VEuPathDB" id="HostDB:ENSMUSG00000022026"/>
<dbReference type="eggNOG" id="KOG3545">
    <property type="taxonomic scope" value="Eukaryota"/>
</dbReference>
<dbReference type="GeneTree" id="ENSGT00940000155454"/>
<dbReference type="InParanoid" id="Q3UZZ4"/>
<dbReference type="OMA" id="LRITYGQ"/>
<dbReference type="PhylomeDB" id="Q3UZZ4"/>
<dbReference type="Reactome" id="R-MMU-6798695">
    <property type="pathway name" value="Neutrophil degranulation"/>
</dbReference>
<dbReference type="ChiTaRS" id="Olfm4">
    <property type="organism name" value="mouse"/>
</dbReference>
<dbReference type="PRO" id="PR:Q3UZZ4"/>
<dbReference type="Proteomes" id="UP000000589">
    <property type="component" value="Chromosome 14"/>
</dbReference>
<dbReference type="RNAct" id="Q3UZZ4">
    <property type="molecule type" value="protein"/>
</dbReference>
<dbReference type="Bgee" id="ENSMUSG00000022026">
    <property type="expression patterns" value="Expressed in paneth cell and 74 other cell types or tissues"/>
</dbReference>
<dbReference type="ExpressionAtlas" id="Q3UZZ4">
    <property type="expression patterns" value="baseline and differential"/>
</dbReference>
<dbReference type="GO" id="GO:0005829">
    <property type="term" value="C:cytosol"/>
    <property type="evidence" value="ECO:0007669"/>
    <property type="project" value="Ensembl"/>
</dbReference>
<dbReference type="GO" id="GO:0005615">
    <property type="term" value="C:extracellular space"/>
    <property type="evidence" value="ECO:0000314"/>
    <property type="project" value="MGI"/>
</dbReference>
<dbReference type="GO" id="GO:0045171">
    <property type="term" value="C:intercellular bridge"/>
    <property type="evidence" value="ECO:0007669"/>
    <property type="project" value="Ensembl"/>
</dbReference>
<dbReference type="GO" id="GO:0005739">
    <property type="term" value="C:mitochondrion"/>
    <property type="evidence" value="ECO:0007669"/>
    <property type="project" value="UniProtKB-SubCell"/>
</dbReference>
<dbReference type="GO" id="GO:0005654">
    <property type="term" value="C:nucleoplasm"/>
    <property type="evidence" value="ECO:0007669"/>
    <property type="project" value="Ensembl"/>
</dbReference>
<dbReference type="GO" id="GO:0048471">
    <property type="term" value="C:perinuclear region of cytoplasm"/>
    <property type="evidence" value="ECO:0007669"/>
    <property type="project" value="Ensembl"/>
</dbReference>
<dbReference type="GO" id="GO:0005886">
    <property type="term" value="C:plasma membrane"/>
    <property type="evidence" value="ECO:0007669"/>
    <property type="project" value="Ensembl"/>
</dbReference>
<dbReference type="GO" id="GO:0032991">
    <property type="term" value="C:protein-containing complex"/>
    <property type="evidence" value="ECO:0007669"/>
    <property type="project" value="Ensembl"/>
</dbReference>
<dbReference type="GO" id="GO:0042581">
    <property type="term" value="C:specific granule"/>
    <property type="evidence" value="ECO:0007669"/>
    <property type="project" value="Ensembl"/>
</dbReference>
<dbReference type="GO" id="GO:0045296">
    <property type="term" value="F:cadherin binding"/>
    <property type="evidence" value="ECO:0007669"/>
    <property type="project" value="Ensembl"/>
</dbReference>
<dbReference type="GO" id="GO:0005198">
    <property type="term" value="F:structural molecule activity"/>
    <property type="evidence" value="ECO:0007669"/>
    <property type="project" value="Ensembl"/>
</dbReference>
<dbReference type="GO" id="GO:0007155">
    <property type="term" value="P:cell adhesion"/>
    <property type="evidence" value="ECO:0007669"/>
    <property type="project" value="UniProtKB-KW"/>
</dbReference>
<dbReference type="GO" id="GO:0006955">
    <property type="term" value="P:immune response"/>
    <property type="evidence" value="ECO:0000315"/>
    <property type="project" value="MGI"/>
</dbReference>
<dbReference type="GO" id="GO:0043124">
    <property type="term" value="P:negative regulation of canonical NF-kappaB signal transduction"/>
    <property type="evidence" value="ECO:0000314"/>
    <property type="project" value="MGI"/>
</dbReference>
<dbReference type="GO" id="GO:0050777">
    <property type="term" value="P:negative regulation of immune response"/>
    <property type="evidence" value="ECO:0000315"/>
    <property type="project" value="MGI"/>
</dbReference>
<dbReference type="GO" id="GO:1900026">
    <property type="term" value="P:positive regulation of substrate adhesion-dependent cell spreading"/>
    <property type="evidence" value="ECO:0007669"/>
    <property type="project" value="Ensembl"/>
</dbReference>
<dbReference type="InterPro" id="IPR003112">
    <property type="entry name" value="Olfac-like_dom"/>
</dbReference>
<dbReference type="InterPro" id="IPR050605">
    <property type="entry name" value="Olfactomedin-like_domain"/>
</dbReference>
<dbReference type="PANTHER" id="PTHR23192:SF7">
    <property type="entry name" value="OLFACTOMEDIN-4"/>
    <property type="match status" value="1"/>
</dbReference>
<dbReference type="PANTHER" id="PTHR23192">
    <property type="entry name" value="OLFACTOMEDIN-RELATED"/>
    <property type="match status" value="1"/>
</dbReference>
<dbReference type="Pfam" id="PF02191">
    <property type="entry name" value="OLF"/>
    <property type="match status" value="1"/>
</dbReference>
<dbReference type="SMART" id="SM00284">
    <property type="entry name" value="OLF"/>
    <property type="match status" value="1"/>
</dbReference>
<dbReference type="PROSITE" id="PS51132">
    <property type="entry name" value="OLF"/>
    <property type="match status" value="1"/>
</dbReference>
<accession>Q3UZZ4</accession>
<reference key="1">
    <citation type="journal article" date="2005" name="Science">
        <title>The transcriptional landscape of the mammalian genome.</title>
        <authorList>
            <person name="Carninci P."/>
            <person name="Kasukawa T."/>
            <person name="Katayama S."/>
            <person name="Gough J."/>
            <person name="Frith M.C."/>
            <person name="Maeda N."/>
            <person name="Oyama R."/>
            <person name="Ravasi T."/>
            <person name="Lenhard B."/>
            <person name="Wells C."/>
            <person name="Kodzius R."/>
            <person name="Shimokawa K."/>
            <person name="Bajic V.B."/>
            <person name="Brenner S.E."/>
            <person name="Batalov S."/>
            <person name="Forrest A.R."/>
            <person name="Zavolan M."/>
            <person name="Davis M.J."/>
            <person name="Wilming L.G."/>
            <person name="Aidinis V."/>
            <person name="Allen J.E."/>
            <person name="Ambesi-Impiombato A."/>
            <person name="Apweiler R."/>
            <person name="Aturaliya R.N."/>
            <person name="Bailey T.L."/>
            <person name="Bansal M."/>
            <person name="Baxter L."/>
            <person name="Beisel K.W."/>
            <person name="Bersano T."/>
            <person name="Bono H."/>
            <person name="Chalk A.M."/>
            <person name="Chiu K.P."/>
            <person name="Choudhary V."/>
            <person name="Christoffels A."/>
            <person name="Clutterbuck D.R."/>
            <person name="Crowe M.L."/>
            <person name="Dalla E."/>
            <person name="Dalrymple B.P."/>
            <person name="de Bono B."/>
            <person name="Della Gatta G."/>
            <person name="di Bernardo D."/>
            <person name="Down T."/>
            <person name="Engstrom P."/>
            <person name="Fagiolini M."/>
            <person name="Faulkner G."/>
            <person name="Fletcher C.F."/>
            <person name="Fukushima T."/>
            <person name="Furuno M."/>
            <person name="Futaki S."/>
            <person name="Gariboldi M."/>
            <person name="Georgii-Hemming P."/>
            <person name="Gingeras T.R."/>
            <person name="Gojobori T."/>
            <person name="Green R.E."/>
            <person name="Gustincich S."/>
            <person name="Harbers M."/>
            <person name="Hayashi Y."/>
            <person name="Hensch T.K."/>
            <person name="Hirokawa N."/>
            <person name="Hill D."/>
            <person name="Huminiecki L."/>
            <person name="Iacono M."/>
            <person name="Ikeo K."/>
            <person name="Iwama A."/>
            <person name="Ishikawa T."/>
            <person name="Jakt M."/>
            <person name="Kanapin A."/>
            <person name="Katoh M."/>
            <person name="Kawasawa Y."/>
            <person name="Kelso J."/>
            <person name="Kitamura H."/>
            <person name="Kitano H."/>
            <person name="Kollias G."/>
            <person name="Krishnan S.P."/>
            <person name="Kruger A."/>
            <person name="Kummerfeld S.K."/>
            <person name="Kurochkin I.V."/>
            <person name="Lareau L.F."/>
            <person name="Lazarevic D."/>
            <person name="Lipovich L."/>
            <person name="Liu J."/>
            <person name="Liuni S."/>
            <person name="McWilliam S."/>
            <person name="Madan Babu M."/>
            <person name="Madera M."/>
            <person name="Marchionni L."/>
            <person name="Matsuda H."/>
            <person name="Matsuzawa S."/>
            <person name="Miki H."/>
            <person name="Mignone F."/>
            <person name="Miyake S."/>
            <person name="Morris K."/>
            <person name="Mottagui-Tabar S."/>
            <person name="Mulder N."/>
            <person name="Nakano N."/>
            <person name="Nakauchi H."/>
            <person name="Ng P."/>
            <person name="Nilsson R."/>
            <person name="Nishiguchi S."/>
            <person name="Nishikawa S."/>
            <person name="Nori F."/>
            <person name="Ohara O."/>
            <person name="Okazaki Y."/>
            <person name="Orlando V."/>
            <person name="Pang K.C."/>
            <person name="Pavan W.J."/>
            <person name="Pavesi G."/>
            <person name="Pesole G."/>
            <person name="Petrovsky N."/>
            <person name="Piazza S."/>
            <person name="Reed J."/>
            <person name="Reid J.F."/>
            <person name="Ring B.Z."/>
            <person name="Ringwald M."/>
            <person name="Rost B."/>
            <person name="Ruan Y."/>
            <person name="Salzberg S.L."/>
            <person name="Sandelin A."/>
            <person name="Schneider C."/>
            <person name="Schoenbach C."/>
            <person name="Sekiguchi K."/>
            <person name="Semple C.A."/>
            <person name="Seno S."/>
            <person name="Sessa L."/>
            <person name="Sheng Y."/>
            <person name="Shibata Y."/>
            <person name="Shimada H."/>
            <person name="Shimada K."/>
            <person name="Silva D."/>
            <person name="Sinclair B."/>
            <person name="Sperling S."/>
            <person name="Stupka E."/>
            <person name="Sugiura K."/>
            <person name="Sultana R."/>
            <person name="Takenaka Y."/>
            <person name="Taki K."/>
            <person name="Tammoja K."/>
            <person name="Tan S.L."/>
            <person name="Tang S."/>
            <person name="Taylor M.S."/>
            <person name="Tegner J."/>
            <person name="Teichmann S.A."/>
            <person name="Ueda H.R."/>
            <person name="van Nimwegen E."/>
            <person name="Verardo R."/>
            <person name="Wei C.L."/>
            <person name="Yagi K."/>
            <person name="Yamanishi H."/>
            <person name="Zabarovsky E."/>
            <person name="Zhu S."/>
            <person name="Zimmer A."/>
            <person name="Hide W."/>
            <person name="Bult C."/>
            <person name="Grimmond S.M."/>
            <person name="Teasdale R.D."/>
            <person name="Liu E.T."/>
            <person name="Brusic V."/>
            <person name="Quackenbush J."/>
            <person name="Wahlestedt C."/>
            <person name="Mattick J.S."/>
            <person name="Hume D.A."/>
            <person name="Kai C."/>
            <person name="Sasaki D."/>
            <person name="Tomaru Y."/>
            <person name="Fukuda S."/>
            <person name="Kanamori-Katayama M."/>
            <person name="Suzuki M."/>
            <person name="Aoki J."/>
            <person name="Arakawa T."/>
            <person name="Iida J."/>
            <person name="Imamura K."/>
            <person name="Itoh M."/>
            <person name="Kato T."/>
            <person name="Kawaji H."/>
            <person name="Kawagashira N."/>
            <person name="Kawashima T."/>
            <person name="Kojima M."/>
            <person name="Kondo S."/>
            <person name="Konno H."/>
            <person name="Nakano K."/>
            <person name="Ninomiya N."/>
            <person name="Nishio T."/>
            <person name="Okada M."/>
            <person name="Plessy C."/>
            <person name="Shibata K."/>
            <person name="Shiraki T."/>
            <person name="Suzuki S."/>
            <person name="Tagami M."/>
            <person name="Waki K."/>
            <person name="Watahiki A."/>
            <person name="Okamura-Oho Y."/>
            <person name="Suzuki H."/>
            <person name="Kawai J."/>
            <person name="Hayashizaki Y."/>
        </authorList>
    </citation>
    <scope>NUCLEOTIDE SEQUENCE [LARGE SCALE MRNA]</scope>
    <source>
        <strain>C57BL/6J</strain>
        <tissue>Intestine</tissue>
    </source>
</reference>
<organism>
    <name type="scientific">Mus musculus</name>
    <name type="common">Mouse</name>
    <dbReference type="NCBI Taxonomy" id="10090"/>
    <lineage>
        <taxon>Eukaryota</taxon>
        <taxon>Metazoa</taxon>
        <taxon>Chordata</taxon>
        <taxon>Craniata</taxon>
        <taxon>Vertebrata</taxon>
        <taxon>Euteleostomi</taxon>
        <taxon>Mammalia</taxon>
        <taxon>Eutheria</taxon>
        <taxon>Euarchontoglires</taxon>
        <taxon>Glires</taxon>
        <taxon>Rodentia</taxon>
        <taxon>Myomorpha</taxon>
        <taxon>Muroidea</taxon>
        <taxon>Muridae</taxon>
        <taxon>Murinae</taxon>
        <taxon>Mus</taxon>
        <taxon>Mus</taxon>
    </lineage>
</organism>
<evidence type="ECO:0000250" key="1"/>
<evidence type="ECO:0000255" key="2"/>
<evidence type="ECO:0000255" key="3">
    <source>
        <dbReference type="PROSITE-ProRule" id="PRU00446"/>
    </source>
</evidence>